<comment type="function">
    <text evidence="1">One of the early assembly proteins it binds 23S rRNA. One of the proteins that surrounds the polypeptide exit tunnel on the outside of the ribosome. Forms the main docking site for trigger factor binding to the ribosome.</text>
</comment>
<comment type="subunit">
    <text evidence="1">Part of the 50S ribosomal subunit. Contacts protein L29, and trigger factor when it is bound to the ribosome.</text>
</comment>
<comment type="similarity">
    <text evidence="1">Belongs to the universal ribosomal protein uL23 family.</text>
</comment>
<name>RL23_STRPQ</name>
<gene>
    <name evidence="1" type="primary">rplW</name>
    <name type="ordered locus">SPs0044</name>
</gene>
<accession>P0DE25</accession>
<accession>Q79YR9</accession>
<accession>Q7CFL4</accession>
<feature type="chain" id="PRO_0000411502" description="Large ribosomal subunit protein uL23">
    <location>
        <begin position="1"/>
        <end position="98"/>
    </location>
</feature>
<organism>
    <name type="scientific">Streptococcus pyogenes serotype M3 (strain SSI-1)</name>
    <dbReference type="NCBI Taxonomy" id="193567"/>
    <lineage>
        <taxon>Bacteria</taxon>
        <taxon>Bacillati</taxon>
        <taxon>Bacillota</taxon>
        <taxon>Bacilli</taxon>
        <taxon>Lactobacillales</taxon>
        <taxon>Streptococcaceae</taxon>
        <taxon>Streptococcus</taxon>
    </lineage>
</organism>
<reference key="1">
    <citation type="journal article" date="2003" name="Genome Res.">
        <title>Genome sequence of an M3 strain of Streptococcus pyogenes reveals a large-scale genomic rearrangement in invasive strains and new insights into phage evolution.</title>
        <authorList>
            <person name="Nakagawa I."/>
            <person name="Kurokawa K."/>
            <person name="Yamashita A."/>
            <person name="Nakata M."/>
            <person name="Tomiyasu Y."/>
            <person name="Okahashi N."/>
            <person name="Kawabata S."/>
            <person name="Yamazaki K."/>
            <person name="Shiba T."/>
            <person name="Yasunaga T."/>
            <person name="Hayashi H."/>
            <person name="Hattori M."/>
            <person name="Hamada S."/>
        </authorList>
    </citation>
    <scope>NUCLEOTIDE SEQUENCE [LARGE SCALE GENOMIC DNA]</scope>
    <source>
        <strain>SSI-1</strain>
    </source>
</reference>
<protein>
    <recommendedName>
        <fullName evidence="1">Large ribosomal subunit protein uL23</fullName>
    </recommendedName>
    <alternativeName>
        <fullName evidence="2">50S ribosomal protein L23</fullName>
    </alternativeName>
</protein>
<proteinExistence type="inferred from homology"/>
<sequence>MNLYDVIKKPVITEKSMIALEAGKYTFEVDTRAHKLLIKQAVEAAFDGVKVASVNTVNVKPKAKRVGRYTGFTSKTKKAIITLTADSKAIELFAAEAE</sequence>
<dbReference type="EMBL" id="BA000034">
    <property type="protein sequence ID" value="BAC63139.1"/>
    <property type="molecule type" value="Genomic_DNA"/>
</dbReference>
<dbReference type="RefSeq" id="WP_002986656.1">
    <property type="nucleotide sequence ID" value="NC_004606.1"/>
</dbReference>
<dbReference type="SMR" id="P0DE25"/>
<dbReference type="KEGG" id="sps:SPs0044"/>
<dbReference type="HOGENOM" id="CLU_037562_3_2_9"/>
<dbReference type="GO" id="GO:1990904">
    <property type="term" value="C:ribonucleoprotein complex"/>
    <property type="evidence" value="ECO:0007669"/>
    <property type="project" value="UniProtKB-KW"/>
</dbReference>
<dbReference type="GO" id="GO:0005840">
    <property type="term" value="C:ribosome"/>
    <property type="evidence" value="ECO:0007669"/>
    <property type="project" value="UniProtKB-KW"/>
</dbReference>
<dbReference type="GO" id="GO:0019843">
    <property type="term" value="F:rRNA binding"/>
    <property type="evidence" value="ECO:0007669"/>
    <property type="project" value="UniProtKB-UniRule"/>
</dbReference>
<dbReference type="GO" id="GO:0003735">
    <property type="term" value="F:structural constituent of ribosome"/>
    <property type="evidence" value="ECO:0007669"/>
    <property type="project" value="InterPro"/>
</dbReference>
<dbReference type="GO" id="GO:0006412">
    <property type="term" value="P:translation"/>
    <property type="evidence" value="ECO:0007669"/>
    <property type="project" value="UniProtKB-UniRule"/>
</dbReference>
<dbReference type="FunFam" id="3.30.70.330:FF:000001">
    <property type="entry name" value="50S ribosomal protein L23"/>
    <property type="match status" value="1"/>
</dbReference>
<dbReference type="Gene3D" id="3.30.70.330">
    <property type="match status" value="1"/>
</dbReference>
<dbReference type="HAMAP" id="MF_01369_B">
    <property type="entry name" value="Ribosomal_uL23_B"/>
    <property type="match status" value="1"/>
</dbReference>
<dbReference type="InterPro" id="IPR012677">
    <property type="entry name" value="Nucleotide-bd_a/b_plait_sf"/>
</dbReference>
<dbReference type="InterPro" id="IPR013025">
    <property type="entry name" value="Ribosomal_uL23-like"/>
</dbReference>
<dbReference type="InterPro" id="IPR012678">
    <property type="entry name" value="Ribosomal_uL23/eL15/eS24_sf"/>
</dbReference>
<dbReference type="InterPro" id="IPR001014">
    <property type="entry name" value="Ribosomal_uL23_CS"/>
</dbReference>
<dbReference type="NCBIfam" id="NF004361">
    <property type="entry name" value="PRK05738.2-1"/>
    <property type="match status" value="1"/>
</dbReference>
<dbReference type="NCBIfam" id="NF004363">
    <property type="entry name" value="PRK05738.2-4"/>
    <property type="match status" value="1"/>
</dbReference>
<dbReference type="PANTHER" id="PTHR11620">
    <property type="entry name" value="60S RIBOSOMAL PROTEIN L23A"/>
    <property type="match status" value="1"/>
</dbReference>
<dbReference type="Pfam" id="PF00276">
    <property type="entry name" value="Ribosomal_L23"/>
    <property type="match status" value="1"/>
</dbReference>
<dbReference type="SUPFAM" id="SSF54189">
    <property type="entry name" value="Ribosomal proteins S24e, L23 and L15e"/>
    <property type="match status" value="1"/>
</dbReference>
<dbReference type="PROSITE" id="PS00050">
    <property type="entry name" value="RIBOSOMAL_L23"/>
    <property type="match status" value="1"/>
</dbReference>
<evidence type="ECO:0000255" key="1">
    <source>
        <dbReference type="HAMAP-Rule" id="MF_01369"/>
    </source>
</evidence>
<evidence type="ECO:0000305" key="2"/>
<keyword id="KW-0687">Ribonucleoprotein</keyword>
<keyword id="KW-0689">Ribosomal protein</keyword>
<keyword id="KW-0694">RNA-binding</keyword>
<keyword id="KW-0699">rRNA-binding</keyword>